<name>PURL_CALMQ</name>
<protein>
    <recommendedName>
        <fullName evidence="1">Phosphoribosylformylglycinamidine synthase subunit PurL</fullName>
        <shortName evidence="1">FGAM synthase</shortName>
        <ecNumber evidence="1">6.3.5.3</ecNumber>
    </recommendedName>
    <alternativeName>
        <fullName evidence="1">Formylglycinamide ribonucleotide amidotransferase subunit II</fullName>
        <shortName evidence="1">FGAR amidotransferase II</shortName>
        <shortName evidence="1">FGAR-AT II</shortName>
    </alternativeName>
    <alternativeName>
        <fullName evidence="1">Glutamine amidotransferase PurL</fullName>
    </alternativeName>
    <alternativeName>
        <fullName evidence="1">Phosphoribosylformylglycinamidine synthase subunit II</fullName>
    </alternativeName>
</protein>
<dbReference type="EC" id="6.3.5.3" evidence="1"/>
<dbReference type="EMBL" id="CP000852">
    <property type="protein sequence ID" value="ABW01508.1"/>
    <property type="molecule type" value="Genomic_DNA"/>
</dbReference>
<dbReference type="RefSeq" id="WP_012185728.1">
    <property type="nucleotide sequence ID" value="NC_009954.1"/>
</dbReference>
<dbReference type="SMR" id="A8MCK2"/>
<dbReference type="STRING" id="397948.Cmaq_0668"/>
<dbReference type="GeneID" id="5710326"/>
<dbReference type="KEGG" id="cma:Cmaq_0668"/>
<dbReference type="eggNOG" id="arCOG00641">
    <property type="taxonomic scope" value="Archaea"/>
</dbReference>
<dbReference type="HOGENOM" id="CLU_003100_0_1_2"/>
<dbReference type="OrthoDB" id="8251at2157"/>
<dbReference type="UniPathway" id="UPA00074">
    <property type="reaction ID" value="UER00128"/>
</dbReference>
<dbReference type="Proteomes" id="UP000001137">
    <property type="component" value="Chromosome"/>
</dbReference>
<dbReference type="GO" id="GO:0005737">
    <property type="term" value="C:cytoplasm"/>
    <property type="evidence" value="ECO:0007669"/>
    <property type="project" value="UniProtKB-SubCell"/>
</dbReference>
<dbReference type="GO" id="GO:0005524">
    <property type="term" value="F:ATP binding"/>
    <property type="evidence" value="ECO:0007669"/>
    <property type="project" value="UniProtKB-UniRule"/>
</dbReference>
<dbReference type="GO" id="GO:0000287">
    <property type="term" value="F:magnesium ion binding"/>
    <property type="evidence" value="ECO:0007669"/>
    <property type="project" value="UniProtKB-UniRule"/>
</dbReference>
<dbReference type="GO" id="GO:0004642">
    <property type="term" value="F:phosphoribosylformylglycinamidine synthase activity"/>
    <property type="evidence" value="ECO:0007669"/>
    <property type="project" value="UniProtKB-UniRule"/>
</dbReference>
<dbReference type="GO" id="GO:0006189">
    <property type="term" value="P:'de novo' IMP biosynthetic process"/>
    <property type="evidence" value="ECO:0007669"/>
    <property type="project" value="UniProtKB-UniRule"/>
</dbReference>
<dbReference type="CDD" id="cd02203">
    <property type="entry name" value="PurL_repeat1"/>
    <property type="match status" value="1"/>
</dbReference>
<dbReference type="CDD" id="cd02204">
    <property type="entry name" value="PurL_repeat2"/>
    <property type="match status" value="1"/>
</dbReference>
<dbReference type="Gene3D" id="3.90.650.10">
    <property type="entry name" value="PurM-like C-terminal domain"/>
    <property type="match status" value="2"/>
</dbReference>
<dbReference type="Gene3D" id="3.30.1330.10">
    <property type="entry name" value="PurM-like, N-terminal domain"/>
    <property type="match status" value="2"/>
</dbReference>
<dbReference type="HAMAP" id="MF_00420">
    <property type="entry name" value="PurL_2"/>
    <property type="match status" value="1"/>
</dbReference>
<dbReference type="InterPro" id="IPR010074">
    <property type="entry name" value="PRibForGlyAmidine_synth_PurL"/>
</dbReference>
<dbReference type="InterPro" id="IPR041609">
    <property type="entry name" value="PurL_linker"/>
</dbReference>
<dbReference type="InterPro" id="IPR010918">
    <property type="entry name" value="PurM-like_C_dom"/>
</dbReference>
<dbReference type="InterPro" id="IPR036676">
    <property type="entry name" value="PurM-like_C_sf"/>
</dbReference>
<dbReference type="InterPro" id="IPR016188">
    <property type="entry name" value="PurM-like_N"/>
</dbReference>
<dbReference type="InterPro" id="IPR036921">
    <property type="entry name" value="PurM-like_N_sf"/>
</dbReference>
<dbReference type="NCBIfam" id="TIGR01736">
    <property type="entry name" value="FGAM_synth_II"/>
    <property type="match status" value="1"/>
</dbReference>
<dbReference type="NCBIfam" id="NF002290">
    <property type="entry name" value="PRK01213.1"/>
    <property type="match status" value="1"/>
</dbReference>
<dbReference type="PANTHER" id="PTHR43555">
    <property type="entry name" value="PHOSPHORIBOSYLFORMYLGLYCINAMIDINE SYNTHASE SUBUNIT PURL"/>
    <property type="match status" value="1"/>
</dbReference>
<dbReference type="PANTHER" id="PTHR43555:SF1">
    <property type="entry name" value="PHOSPHORIBOSYLFORMYLGLYCINAMIDINE SYNTHASE SUBUNIT PURL"/>
    <property type="match status" value="1"/>
</dbReference>
<dbReference type="Pfam" id="PF00586">
    <property type="entry name" value="AIRS"/>
    <property type="match status" value="2"/>
</dbReference>
<dbReference type="Pfam" id="PF02769">
    <property type="entry name" value="AIRS_C"/>
    <property type="match status" value="2"/>
</dbReference>
<dbReference type="Pfam" id="PF18072">
    <property type="entry name" value="FGAR-AT_linker"/>
    <property type="match status" value="1"/>
</dbReference>
<dbReference type="PIRSF" id="PIRSF001587">
    <property type="entry name" value="FGAM_synthase_II"/>
    <property type="match status" value="1"/>
</dbReference>
<dbReference type="SUPFAM" id="SSF56042">
    <property type="entry name" value="PurM C-terminal domain-like"/>
    <property type="match status" value="2"/>
</dbReference>
<dbReference type="SUPFAM" id="SSF55326">
    <property type="entry name" value="PurM N-terminal domain-like"/>
    <property type="match status" value="2"/>
</dbReference>
<keyword id="KW-0067">ATP-binding</keyword>
<keyword id="KW-0963">Cytoplasm</keyword>
<keyword id="KW-0436">Ligase</keyword>
<keyword id="KW-0460">Magnesium</keyword>
<keyword id="KW-0479">Metal-binding</keyword>
<keyword id="KW-0547">Nucleotide-binding</keyword>
<keyword id="KW-0658">Purine biosynthesis</keyword>
<keyword id="KW-1185">Reference proteome</keyword>
<sequence length="724" mass="77413">MGLTSDEAKIIINTLGRNPTEAEWLIFEAEWSEHCSYKSSRAWIRLLPSKSPLVIRGSGLDAPIIRINNIAVTFKIESHNHPSAVDPYDGAATGVGGIVRDILTTGLRPIALLDNLHLGSLDNQRSLWLSRNIIKGISDYGNRIGVPVVGGETWFDESFNNNPIVLVTCIGAGDFKRVIWGEGKVGDLVLVVGNDTGRDGMLGSSFASRELSSSDDIGAVQVGNPLLEKLLIDALMELGERGLVKAIKDVGGGGLATALSELAHQLGLGIEVDLTNIRLRDELKPEEILVSESQERMIIVVDPSRLSYVEAVLRKYEVGFDLIGKLTNDGKFTAYYKGIKLIDLPLDLITNPPEPIRKYTEPVYLMRLRRIPPLPSVKFNEALIKVASSPNLASKEVIYTQYDYEVGVRTVIKPGRAGATVLRLLEEDGGDGKLGIAVKADSNPRYSYLNPFTGAANSLAKAYRNVASVGAKPIAAVDSINVGNPEKPDKYWYFVKTVEGLTWMGNALGIPFVGGKVSFYNEDSVTGASIKPVVAVAVLGVVNDYAKAIEGGLTGEGWLVIIGDTGPELGGSEFLHSVHGLVAGEPPEPKPLSEVKNANLVMQLINNGLAKAVMDVGVGGLAAALIKMSIIGGVGFTVDLSKAPLTQGLNDPVTVAFSETNARYIIETSNLKETVRIIEANGVPYGVLGESGGGIVQFKWGGLELASLSVDDLVSINDSLRGVI</sequence>
<comment type="function">
    <text evidence="1">Part of the phosphoribosylformylglycinamidine synthase complex involved in the purines biosynthetic pathway. Catalyzes the ATP-dependent conversion of formylglycinamide ribonucleotide (FGAR) and glutamine to yield formylglycinamidine ribonucleotide (FGAM) and glutamate. The FGAM synthase complex is composed of three subunits. PurQ produces an ammonia molecule by converting glutamine to glutamate. PurL transfers the ammonia molecule to FGAR to form FGAM in an ATP-dependent manner. PurS interacts with PurQ and PurL and is thought to assist in the transfer of the ammonia molecule from PurQ to PurL.</text>
</comment>
<comment type="catalytic activity">
    <reaction evidence="1">
        <text>N(2)-formyl-N(1)-(5-phospho-beta-D-ribosyl)glycinamide + L-glutamine + ATP + H2O = 2-formamido-N(1)-(5-O-phospho-beta-D-ribosyl)acetamidine + L-glutamate + ADP + phosphate + H(+)</text>
        <dbReference type="Rhea" id="RHEA:17129"/>
        <dbReference type="ChEBI" id="CHEBI:15377"/>
        <dbReference type="ChEBI" id="CHEBI:15378"/>
        <dbReference type="ChEBI" id="CHEBI:29985"/>
        <dbReference type="ChEBI" id="CHEBI:30616"/>
        <dbReference type="ChEBI" id="CHEBI:43474"/>
        <dbReference type="ChEBI" id="CHEBI:58359"/>
        <dbReference type="ChEBI" id="CHEBI:147286"/>
        <dbReference type="ChEBI" id="CHEBI:147287"/>
        <dbReference type="ChEBI" id="CHEBI:456216"/>
        <dbReference type="EC" id="6.3.5.3"/>
    </reaction>
</comment>
<comment type="pathway">
    <text evidence="1">Purine metabolism; IMP biosynthesis via de novo pathway; 5-amino-1-(5-phospho-D-ribosyl)imidazole from N(2)-formyl-N(1)-(5-phospho-D-ribosyl)glycinamide: step 1/2.</text>
</comment>
<comment type="subunit">
    <text evidence="1">Monomer. Part of the FGAM synthase complex composed of 1 PurL, 1 PurQ and 2 PurS subunits.</text>
</comment>
<comment type="subcellular location">
    <subcellularLocation>
        <location evidence="1">Cytoplasm</location>
    </subcellularLocation>
</comment>
<comment type="similarity">
    <text evidence="1">Belongs to the FGAMS family.</text>
</comment>
<organism>
    <name type="scientific">Caldivirga maquilingensis (strain ATCC 700844 / DSM 13496 / JCM 10307 / IC-167)</name>
    <dbReference type="NCBI Taxonomy" id="397948"/>
    <lineage>
        <taxon>Archaea</taxon>
        <taxon>Thermoproteota</taxon>
        <taxon>Thermoprotei</taxon>
        <taxon>Thermoproteales</taxon>
        <taxon>Thermoproteaceae</taxon>
        <taxon>Caldivirga</taxon>
    </lineage>
</organism>
<feature type="chain" id="PRO_1000080551" description="Phosphoribosylformylglycinamidine synthase subunit PurL">
    <location>
        <begin position="1"/>
        <end position="724"/>
    </location>
</feature>
<feature type="active site" evidence="1">
    <location>
        <position position="34"/>
    </location>
</feature>
<feature type="active site" description="Proton acceptor" evidence="1">
    <location>
        <position position="79"/>
    </location>
</feature>
<feature type="binding site" evidence="1">
    <location>
        <position position="37"/>
    </location>
    <ligand>
        <name>ATP</name>
        <dbReference type="ChEBI" id="CHEBI:30616"/>
    </ligand>
</feature>
<feature type="binding site" evidence="1">
    <location>
        <position position="75"/>
    </location>
    <ligand>
        <name>ATP</name>
        <dbReference type="ChEBI" id="CHEBI:30616"/>
    </ligand>
</feature>
<feature type="binding site" evidence="1">
    <location>
        <position position="77"/>
    </location>
    <ligand>
        <name>Mg(2+)</name>
        <dbReference type="ChEBI" id="CHEBI:18420"/>
        <label>1</label>
    </ligand>
</feature>
<feature type="binding site" evidence="1">
    <location>
        <begin position="78"/>
        <end position="81"/>
    </location>
    <ligand>
        <name>substrate</name>
    </ligand>
</feature>
<feature type="binding site" evidence="1">
    <location>
        <position position="100"/>
    </location>
    <ligand>
        <name>substrate</name>
    </ligand>
</feature>
<feature type="binding site" evidence="1">
    <location>
        <position position="101"/>
    </location>
    <ligand>
        <name>Mg(2+)</name>
        <dbReference type="ChEBI" id="CHEBI:18420"/>
        <label>2</label>
    </ligand>
</feature>
<feature type="binding site" evidence="1">
    <location>
        <position position="221"/>
    </location>
    <ligand>
        <name>substrate</name>
    </ligand>
</feature>
<feature type="binding site" evidence="1">
    <location>
        <position position="249"/>
    </location>
    <ligand>
        <name>Mg(2+)</name>
        <dbReference type="ChEBI" id="CHEBI:18420"/>
        <label>2</label>
    </ligand>
</feature>
<feature type="binding site" evidence="1">
    <location>
        <begin position="292"/>
        <end position="294"/>
    </location>
    <ligand>
        <name>substrate</name>
    </ligand>
</feature>
<feature type="binding site" evidence="1">
    <location>
        <position position="478"/>
    </location>
    <ligand>
        <name>ATP</name>
        <dbReference type="ChEBI" id="CHEBI:30616"/>
    </ligand>
</feature>
<feature type="binding site" evidence="1">
    <location>
        <position position="515"/>
    </location>
    <ligand>
        <name>ATP</name>
        <dbReference type="ChEBI" id="CHEBI:30616"/>
    </ligand>
</feature>
<feature type="binding site" evidence="1">
    <location>
        <position position="518"/>
    </location>
    <ligand>
        <name>substrate</name>
    </ligand>
</feature>
<evidence type="ECO:0000255" key="1">
    <source>
        <dbReference type="HAMAP-Rule" id="MF_00420"/>
    </source>
</evidence>
<reference key="1">
    <citation type="submission" date="2007-10" db="EMBL/GenBank/DDBJ databases">
        <title>Complete sequence of Caldivirga maquilingensis IC-167.</title>
        <authorList>
            <consortium name="US DOE Joint Genome Institute"/>
            <person name="Copeland A."/>
            <person name="Lucas S."/>
            <person name="Lapidus A."/>
            <person name="Barry K."/>
            <person name="Glavina del Rio T."/>
            <person name="Dalin E."/>
            <person name="Tice H."/>
            <person name="Pitluck S."/>
            <person name="Saunders E."/>
            <person name="Brettin T."/>
            <person name="Bruce D."/>
            <person name="Detter J.C."/>
            <person name="Han C."/>
            <person name="Schmutz J."/>
            <person name="Larimer F."/>
            <person name="Land M."/>
            <person name="Hauser L."/>
            <person name="Kyrpides N."/>
            <person name="Ivanova N."/>
            <person name="Biddle J.F."/>
            <person name="Zhang Z."/>
            <person name="Fitz-Gibbon S.T."/>
            <person name="Lowe T.M."/>
            <person name="Saltikov C."/>
            <person name="House C.H."/>
            <person name="Richardson P."/>
        </authorList>
    </citation>
    <scope>NUCLEOTIDE SEQUENCE [LARGE SCALE GENOMIC DNA]</scope>
    <source>
        <strain>ATCC 700844 / DSM 13496 / JCM 10307 / IC-167</strain>
    </source>
</reference>
<proteinExistence type="inferred from homology"/>
<gene>
    <name evidence="1" type="primary">purL</name>
    <name type="ordered locus">Cmaq_0668</name>
</gene>
<accession>A8MCK2</accession>